<evidence type="ECO:0000250" key="1">
    <source>
        <dbReference type="UniProtKB" id="O60725"/>
    </source>
</evidence>
<evidence type="ECO:0000255" key="2">
    <source>
        <dbReference type="RuleBase" id="RU362022"/>
    </source>
</evidence>
<evidence type="ECO:0000269" key="3">
    <source>
    </source>
</evidence>
<evidence type="ECO:0000303" key="4">
    <source>
    </source>
</evidence>
<evidence type="ECO:0000305" key="5">
    <source>
    </source>
</evidence>
<evidence type="ECO:0000312" key="6">
    <source>
        <dbReference type="EMBL" id="EFA03159.1"/>
    </source>
</evidence>
<evidence type="ECO:0000312" key="7">
    <source>
        <dbReference type="Proteomes" id="UP000007266"/>
    </source>
</evidence>
<evidence type="ECO:0007744" key="8">
    <source>
        <dbReference type="PDB" id="5V7P"/>
    </source>
</evidence>
<evidence type="ECO:0007744" key="9">
    <source>
        <dbReference type="PDB" id="5VG9"/>
    </source>
</evidence>
<evidence type="ECO:0007829" key="10">
    <source>
        <dbReference type="PDB" id="5V7P"/>
    </source>
</evidence>
<dbReference type="EC" id="2.1.1.100" evidence="3"/>
<dbReference type="EMBL" id="KQ971343">
    <property type="protein sequence ID" value="EFA03159.1"/>
    <property type="molecule type" value="Genomic_DNA"/>
</dbReference>
<dbReference type="RefSeq" id="XP_008194418.1">
    <property type="nucleotide sequence ID" value="XM_008196196.2"/>
</dbReference>
<dbReference type="PDB" id="5V7P">
    <property type="method" value="X-ray"/>
    <property type="resolution" value="2.30 A"/>
    <property type="chains" value="A=1-281"/>
</dbReference>
<dbReference type="PDB" id="5VG9">
    <property type="method" value="X-ray"/>
    <property type="resolution" value="4.00 A"/>
    <property type="chains" value="A=1-281"/>
</dbReference>
<dbReference type="PDBsum" id="5V7P"/>
<dbReference type="PDBsum" id="5VG9"/>
<dbReference type="SMR" id="D6WJ77"/>
<dbReference type="FunCoup" id="D6WJ77">
    <property type="interactions" value="569"/>
</dbReference>
<dbReference type="STRING" id="7070.D6WJ77"/>
<dbReference type="EnsemblMetazoa" id="TC013078_001">
    <property type="protein sequence ID" value="TC013078_001"/>
    <property type="gene ID" value="TC013078"/>
</dbReference>
<dbReference type="GeneID" id="663323"/>
<dbReference type="KEGG" id="tca:663323"/>
<dbReference type="CTD" id="136030347"/>
<dbReference type="eggNOG" id="KOG2628">
    <property type="taxonomic scope" value="Eukaryota"/>
</dbReference>
<dbReference type="HOGENOM" id="CLU_065200_0_1_1"/>
<dbReference type="InParanoid" id="D6WJ77"/>
<dbReference type="OMA" id="GMVPQVW"/>
<dbReference type="OrthoDB" id="422086at2759"/>
<dbReference type="PhylomeDB" id="D6WJ77"/>
<dbReference type="Proteomes" id="UP000007266">
    <property type="component" value="Linkage group 5"/>
</dbReference>
<dbReference type="GO" id="GO:0005783">
    <property type="term" value="C:endoplasmic reticulum"/>
    <property type="evidence" value="ECO:0000318"/>
    <property type="project" value="GO_Central"/>
</dbReference>
<dbReference type="GO" id="GO:0005789">
    <property type="term" value="C:endoplasmic reticulum membrane"/>
    <property type="evidence" value="ECO:0007669"/>
    <property type="project" value="UniProtKB-SubCell"/>
</dbReference>
<dbReference type="GO" id="GO:0004671">
    <property type="term" value="F:protein C-terminal S-isoprenylcysteine carboxyl O-methyltransferase activity"/>
    <property type="evidence" value="ECO:0000318"/>
    <property type="project" value="GO_Central"/>
</dbReference>
<dbReference type="GO" id="GO:0032259">
    <property type="term" value="P:methylation"/>
    <property type="evidence" value="ECO:0007669"/>
    <property type="project" value="UniProtKB-KW"/>
</dbReference>
<dbReference type="Gene3D" id="1.20.120.1630">
    <property type="match status" value="1"/>
</dbReference>
<dbReference type="InterPro" id="IPR007269">
    <property type="entry name" value="ICMT_MeTrfase"/>
</dbReference>
<dbReference type="InterPro" id="IPR025770">
    <property type="entry name" value="PPMT_MeTrfase"/>
</dbReference>
<dbReference type="PANTHER" id="PTHR12714">
    <property type="entry name" value="PROTEIN-S ISOPRENYLCYSTEINE O-METHYLTRANSFERASE"/>
    <property type="match status" value="1"/>
</dbReference>
<dbReference type="PANTHER" id="PTHR12714:SF9">
    <property type="entry name" value="PROTEIN-S-ISOPRENYLCYSTEINE O-METHYLTRANSFERASE"/>
    <property type="match status" value="1"/>
</dbReference>
<dbReference type="Pfam" id="PF04140">
    <property type="entry name" value="ICMT"/>
    <property type="match status" value="1"/>
</dbReference>
<dbReference type="PROSITE" id="PS51564">
    <property type="entry name" value="SAM_ICMT"/>
    <property type="match status" value="1"/>
</dbReference>
<comment type="function">
    <text evidence="3">Catalyzes the post-translational methylation of isoprenylated C-terminal cysteine residues.</text>
</comment>
<comment type="catalytic activity">
    <reaction evidence="3">
        <text>[protein]-C-terminal S-[(2E,6E)-farnesyl]-L-cysteine + S-adenosyl-L-methionine = [protein]-C-terminal S-[(2E,6E)-farnesyl]-L-cysteine methyl ester + S-adenosyl-L-homocysteine</text>
        <dbReference type="Rhea" id="RHEA:21672"/>
        <dbReference type="Rhea" id="RHEA-COMP:12125"/>
        <dbReference type="Rhea" id="RHEA-COMP:12126"/>
        <dbReference type="ChEBI" id="CHEBI:57856"/>
        <dbReference type="ChEBI" id="CHEBI:59789"/>
        <dbReference type="ChEBI" id="CHEBI:90510"/>
        <dbReference type="ChEBI" id="CHEBI:90511"/>
        <dbReference type="EC" id="2.1.1.100"/>
    </reaction>
</comment>
<comment type="biophysicochemical properties">
    <kinetics>
        <KM evidence="3">25 uM for S-adenosyl-L-methionine</KM>
        <Vmax evidence="3">101.0 pmol/min/ug enzyme towards S-adenosyl-L-methionine</Vmax>
        <Vmax evidence="3">42.0 pmol/min/ug enzyme towards biotin-S-farnesyl-L-cysteine (BFC)</Vmax>
        <text evidence="3">kcat is 3.3 min(-1) for S-adenosyl-L-methionine. kcat is 1.4 min(-1) for biotin-S-farnesyl-L-cysteine (BFC).</text>
    </kinetics>
</comment>
<comment type="subcellular location">
    <subcellularLocation>
        <location evidence="1">Endoplasmic reticulum membrane</location>
        <topology evidence="5">Multi-pass membrane protein</topology>
    </subcellularLocation>
</comment>
<comment type="similarity">
    <text evidence="2">Belongs to the class VI-like SAM-binding methyltransferase superfamily. Isoprenylcysteine carboxyl methyltransferase family.</text>
</comment>
<accession>D6WJ77</accession>
<keyword id="KW-0002">3D-structure</keyword>
<keyword id="KW-0256">Endoplasmic reticulum</keyword>
<keyword id="KW-0472">Membrane</keyword>
<keyword id="KW-0489">Methyltransferase</keyword>
<keyword id="KW-1185">Reference proteome</keyword>
<keyword id="KW-0949">S-adenosyl-L-methionine</keyword>
<keyword id="KW-0808">Transferase</keyword>
<keyword id="KW-0812">Transmembrane</keyword>
<keyword id="KW-1133">Transmembrane helix</keyword>
<organism evidence="7">
    <name type="scientific">Tribolium castaneum</name>
    <name type="common">Red flour beetle</name>
    <dbReference type="NCBI Taxonomy" id="7070"/>
    <lineage>
        <taxon>Eukaryota</taxon>
        <taxon>Metazoa</taxon>
        <taxon>Ecdysozoa</taxon>
        <taxon>Arthropoda</taxon>
        <taxon>Hexapoda</taxon>
        <taxon>Insecta</taxon>
        <taxon>Pterygota</taxon>
        <taxon>Neoptera</taxon>
        <taxon>Endopterygota</taxon>
        <taxon>Coleoptera</taxon>
        <taxon>Polyphaga</taxon>
        <taxon>Cucujiformia</taxon>
        <taxon>Tenebrionidae</taxon>
        <taxon>Tenebrionidae incertae sedis</taxon>
        <taxon>Tribolium</taxon>
    </lineage>
</organism>
<name>ICMT_TRICA</name>
<protein>
    <recommendedName>
        <fullName evidence="4">Protein-S-isoprenylcysteine O-methyltransferase</fullName>
        <ecNumber evidence="3">2.1.1.100</ecNumber>
    </recommendedName>
</protein>
<sequence length="281" mass="32103">MLSPAGKISLQSFTGSSLVFFVICMFNHYYGITNLVVNTLIVFFYAVNVYFFLKFFYNEFAFAIAIRAAFLGLVLVLGLYIKLVAPPNIQIFGGYMSVMALFHYSEFLAIAIVQPKQVSTDSFVINHSPQYTIAAVSSWVEFFIETYFFPGLKEIHWLSNIGLCVCILGEVLRKTAILTAGSNFNHLVQCEKSSDHVLVTHGVYAWFRHPSYVGWFYWSIGTQIILINPLCIPAYTLASWMFFKERIYIEESMLLSFFGQQYCDYQQQVGTGIPFIEGYKI</sequence>
<gene>
    <name evidence="4" type="primary">ICMT</name>
    <name evidence="6" type="ORF">TcasGA2_TC013078</name>
</gene>
<reference evidence="7" key="1">
    <citation type="journal article" date="2008" name="Nature">
        <title>The genome of the model beetle and pest Tribolium castaneum.</title>
        <authorList>
            <consortium name="Tribolium Genome Sequencing Consortium"/>
            <person name="Richards S."/>
            <person name="Gibbs R.A."/>
            <person name="Weinstock G.M."/>
            <person name="Brown S.J."/>
            <person name="Denell R."/>
            <person name="Beeman R.W."/>
            <person name="Gibbs R."/>
            <person name="Beeman R.W."/>
            <person name="Brown S.J."/>
            <person name="Bucher G."/>
            <person name="Friedrich M."/>
            <person name="Grimmelikhuijzen C.J."/>
            <person name="Klingler M."/>
            <person name="Lorenzen M."/>
            <person name="Richards S."/>
            <person name="Roth S."/>
            <person name="Schroder R."/>
            <person name="Tautz D."/>
            <person name="Zdobnov E.M."/>
            <person name="Muzny D."/>
            <person name="Gibbs R.A."/>
            <person name="Weinstock G.M."/>
            <person name="Attaway T."/>
            <person name="Bell S."/>
            <person name="Buhay C.J."/>
            <person name="Chandrabose M.N."/>
            <person name="Chavez D."/>
            <person name="Clerk-Blankenburg K.P."/>
            <person name="Cree A."/>
            <person name="Dao M."/>
            <person name="Davis C."/>
            <person name="Chacko J."/>
            <person name="Dinh H."/>
            <person name="Dugan-Rocha S."/>
            <person name="Fowler G."/>
            <person name="Garner T.T."/>
            <person name="Garnes J."/>
            <person name="Gnirke A."/>
            <person name="Hawes A."/>
            <person name="Hernandez J."/>
            <person name="Hines S."/>
            <person name="Holder M."/>
            <person name="Hume J."/>
            <person name="Jhangiani S.N."/>
            <person name="Joshi V."/>
            <person name="Khan Z.M."/>
            <person name="Jackson L."/>
            <person name="Kovar C."/>
            <person name="Kowis A."/>
            <person name="Lee S."/>
            <person name="Lewis L.R."/>
            <person name="Margolis J."/>
            <person name="Morgan M."/>
            <person name="Nazareth L.V."/>
            <person name="Nguyen N."/>
            <person name="Okwuonu G."/>
            <person name="Parker D."/>
            <person name="Richards S."/>
            <person name="Ruiz S.J."/>
            <person name="Santibanez J."/>
            <person name="Savard J."/>
            <person name="Scherer S.E."/>
            <person name="Schneider B."/>
            <person name="Sodergren E."/>
            <person name="Tautz D."/>
            <person name="Vattahil S."/>
            <person name="Villasana D."/>
            <person name="White C.S."/>
            <person name="Wright R."/>
            <person name="Park Y."/>
            <person name="Beeman R.W."/>
            <person name="Lord J."/>
            <person name="Oppert B."/>
            <person name="Lorenzen M."/>
            <person name="Brown S."/>
            <person name="Wang L."/>
            <person name="Savard J."/>
            <person name="Tautz D."/>
            <person name="Richards S."/>
            <person name="Weinstock G."/>
            <person name="Gibbs R.A."/>
            <person name="Liu Y."/>
            <person name="Worley K."/>
            <person name="Weinstock G."/>
            <person name="Elsik C.G."/>
            <person name="Reese J.T."/>
            <person name="Elhaik E."/>
            <person name="Landan G."/>
            <person name="Graur D."/>
            <person name="Arensburger P."/>
            <person name="Atkinson P."/>
            <person name="Beeman R.W."/>
            <person name="Beidler J."/>
            <person name="Brown S.J."/>
            <person name="Demuth J.P."/>
            <person name="Drury D.W."/>
            <person name="Du Y.Z."/>
            <person name="Fujiwara H."/>
            <person name="Lorenzen M."/>
            <person name="Maselli V."/>
            <person name="Osanai M."/>
            <person name="Park Y."/>
            <person name="Robertson H.M."/>
            <person name="Tu Z."/>
            <person name="Wang J.J."/>
            <person name="Wang S."/>
            <person name="Richards S."/>
            <person name="Song H."/>
            <person name="Zhang L."/>
            <person name="Sodergren E."/>
            <person name="Werner D."/>
            <person name="Stanke M."/>
            <person name="Morgenstern B."/>
            <person name="Solovyev V."/>
            <person name="Kosarev P."/>
            <person name="Brown G."/>
            <person name="Chen H.C."/>
            <person name="Ermolaeva O."/>
            <person name="Hlavina W."/>
            <person name="Kapustin Y."/>
            <person name="Kiryutin B."/>
            <person name="Kitts P."/>
            <person name="Maglott D."/>
            <person name="Pruitt K."/>
            <person name="Sapojnikov V."/>
            <person name="Souvorov A."/>
            <person name="Mackey A.J."/>
            <person name="Waterhouse R.M."/>
            <person name="Wyder S."/>
            <person name="Zdobnov E.M."/>
            <person name="Zdobnov E.M."/>
            <person name="Wyder S."/>
            <person name="Kriventseva E.V."/>
            <person name="Kadowaki T."/>
            <person name="Bork P."/>
            <person name="Aranda M."/>
            <person name="Bao R."/>
            <person name="Beermann A."/>
            <person name="Berns N."/>
            <person name="Bolognesi R."/>
            <person name="Bonneton F."/>
            <person name="Bopp D."/>
            <person name="Brown S.J."/>
            <person name="Bucher G."/>
            <person name="Butts T."/>
            <person name="Chaumot A."/>
            <person name="Denell R.E."/>
            <person name="Ferrier D.E."/>
            <person name="Friedrich M."/>
            <person name="Gordon C.M."/>
            <person name="Jindra M."/>
            <person name="Klingler M."/>
            <person name="Lan Q."/>
            <person name="Lattorff H.M."/>
            <person name="Laudet V."/>
            <person name="von Levetsow C."/>
            <person name="Liu Z."/>
            <person name="Lutz R."/>
            <person name="Lynch J.A."/>
            <person name="da Fonseca R.N."/>
            <person name="Posnien N."/>
            <person name="Reuter R."/>
            <person name="Roth S."/>
            <person name="Savard J."/>
            <person name="Schinko J.B."/>
            <person name="Schmitt C."/>
            <person name="Schoppmeier M."/>
            <person name="Schroder R."/>
            <person name="Shippy T.D."/>
            <person name="Simonnet F."/>
            <person name="Marques-Souza H."/>
            <person name="Tautz D."/>
            <person name="Tomoyasu Y."/>
            <person name="Trauner J."/>
            <person name="Van der Zee M."/>
            <person name="Vervoort M."/>
            <person name="Wittkopp N."/>
            <person name="Wimmer E.A."/>
            <person name="Yang X."/>
            <person name="Jones A.K."/>
            <person name="Sattelle D.B."/>
            <person name="Ebert P.R."/>
            <person name="Nelson D."/>
            <person name="Scott J.G."/>
            <person name="Beeman R.W."/>
            <person name="Muthukrishnan S."/>
            <person name="Kramer K.J."/>
            <person name="Arakane Y."/>
            <person name="Beeman R.W."/>
            <person name="Zhu Q."/>
            <person name="Hogenkamp D."/>
            <person name="Dixit R."/>
            <person name="Oppert B."/>
            <person name="Jiang H."/>
            <person name="Zou Z."/>
            <person name="Marshall J."/>
            <person name="Elpidina E."/>
            <person name="Vinokurov K."/>
            <person name="Oppert C."/>
            <person name="Zou Z."/>
            <person name="Evans J."/>
            <person name="Lu Z."/>
            <person name="Zhao P."/>
            <person name="Sumathipala N."/>
            <person name="Altincicek B."/>
            <person name="Vilcinskas A."/>
            <person name="Williams M."/>
            <person name="Hultmark D."/>
            <person name="Hetru C."/>
            <person name="Jiang H."/>
            <person name="Grimmelikhuijzen C.J."/>
            <person name="Hauser F."/>
            <person name="Cazzamali G."/>
            <person name="Williamson M."/>
            <person name="Park Y."/>
            <person name="Li B."/>
            <person name="Tanaka Y."/>
            <person name="Predel R."/>
            <person name="Neupert S."/>
            <person name="Schachtner J."/>
            <person name="Verleyen P."/>
            <person name="Raible F."/>
            <person name="Bork P."/>
            <person name="Friedrich M."/>
            <person name="Walden K.K."/>
            <person name="Robertson H.M."/>
            <person name="Angeli S."/>
            <person name="Foret S."/>
            <person name="Bucher G."/>
            <person name="Schuetz S."/>
            <person name="Maleszka R."/>
            <person name="Wimmer E.A."/>
            <person name="Beeman R.W."/>
            <person name="Lorenzen M."/>
            <person name="Tomoyasu Y."/>
            <person name="Miller S.C."/>
            <person name="Grossmann D."/>
            <person name="Bucher G."/>
        </authorList>
    </citation>
    <scope>NUCLEOTIDE SEQUENCE [LARGE SCALE GENOMIC DNA]</scope>
    <source>
        <strain evidence="7">Georgia GA2</strain>
    </source>
</reference>
<reference evidence="8 9" key="2">
    <citation type="journal article" date="2018" name="Nature">
        <title>Atomic structure of the eukaryotic intramembrane RAS methyltransferase ICMT.</title>
        <authorList>
            <person name="Diver M.M."/>
            <person name="Pedi L."/>
            <person name="Koide A."/>
            <person name="Koide S."/>
            <person name="Long S.B."/>
        </authorList>
    </citation>
    <scope>X-RAY CRYSTALLOGRAPHY (2.30 ANGSTROMS) IN APO FORM AND IN COMPLEX WITH S-ADENOSYL-L-HOMOCYSTEINE AND INHIBITOR</scope>
    <scope>FUNCTION</scope>
    <scope>CATALYTIC ACTIVITY</scope>
    <scope>BIOPHYSICOCHEMICAL PROPERTIES</scope>
    <scope>TOPOLOGY</scope>
</reference>
<proteinExistence type="evidence at protein level"/>
<feature type="chain" id="PRO_0000451076" description="Protein-S-isoprenylcysteine O-methyltransferase">
    <location>
        <begin position="1"/>
        <end position="281"/>
    </location>
</feature>
<feature type="topological domain" description="Cytoplasmic" evidence="5">
    <location>
        <begin position="1"/>
        <end position="2"/>
    </location>
</feature>
<feature type="transmembrane region" description="Helical" evidence="5">
    <location>
        <begin position="3"/>
        <end position="29"/>
    </location>
</feature>
<feature type="topological domain" description="Lumenal" evidence="5">
    <location>
        <begin position="30"/>
        <end position="35"/>
    </location>
</feature>
<feature type="transmembrane region" description="Helical" evidence="5">
    <location>
        <begin position="36"/>
        <end position="53"/>
    </location>
</feature>
<feature type="topological domain" description="Cytoplasmic" evidence="5">
    <location>
        <begin position="54"/>
        <end position="58"/>
    </location>
</feature>
<feature type="transmembrane region" description="Helical" evidence="5">
    <location>
        <begin position="59"/>
        <end position="85"/>
    </location>
</feature>
<feature type="topological domain" description="Lumenal" evidence="5">
    <location>
        <begin position="86"/>
        <end position="88"/>
    </location>
</feature>
<feature type="transmembrane region" description="Helical" evidence="5">
    <location>
        <begin position="89"/>
        <end position="113"/>
    </location>
</feature>
<feature type="topological domain" description="Cytoplasmic" evidence="5">
    <location>
        <begin position="114"/>
        <end position="118"/>
    </location>
</feature>
<feature type="transmembrane region" description="Helical" evidence="5">
    <location>
        <begin position="119"/>
        <end position="149"/>
    </location>
</feature>
<feature type="topological domain" description="Lumenal" evidence="5">
    <location>
        <begin position="150"/>
        <end position="155"/>
    </location>
</feature>
<feature type="transmembrane region" description="Helical" evidence="5">
    <location>
        <begin position="156"/>
        <end position="181"/>
    </location>
</feature>
<feature type="topological domain" description="Cytoplasmic" evidence="5">
    <location>
        <begin position="182"/>
        <end position="208"/>
    </location>
</feature>
<feature type="transmembrane region" description="Helical" evidence="5">
    <location>
        <begin position="209"/>
        <end position="226"/>
    </location>
</feature>
<feature type="topological domain" description="Lumenal" evidence="5">
    <location>
        <begin position="227"/>
        <end position="229"/>
    </location>
</feature>
<feature type="transmembrane region" description="Helical" evidence="5">
    <location>
        <begin position="230"/>
        <end position="243"/>
    </location>
</feature>
<feature type="topological domain" description="Cytoplasmic" evidence="5">
    <location>
        <begin position="244"/>
        <end position="281"/>
    </location>
</feature>
<feature type="binding site" evidence="3 8 9">
    <location>
        <position position="189"/>
    </location>
    <ligand>
        <name>S-adenosyl-L-methionine</name>
        <dbReference type="ChEBI" id="CHEBI:59789"/>
    </ligand>
</feature>
<feature type="binding site" evidence="3 8 9">
    <location>
        <begin position="196"/>
        <end position="199"/>
    </location>
    <ligand>
        <name>S-adenosyl-L-methionine</name>
        <dbReference type="ChEBI" id="CHEBI:59789"/>
    </ligand>
</feature>
<feature type="binding site" evidence="3 8 9">
    <location>
        <position position="204"/>
    </location>
    <ligand>
        <name>S-adenosyl-L-methionine</name>
        <dbReference type="ChEBI" id="CHEBI:59789"/>
    </ligand>
</feature>
<feature type="binding site" evidence="3 8 9">
    <location>
        <begin position="209"/>
        <end position="212"/>
    </location>
    <ligand>
        <name>S-adenosyl-L-methionine</name>
        <dbReference type="ChEBI" id="CHEBI:59789"/>
    </ligand>
</feature>
<feature type="binding site" evidence="5">
    <location>
        <position position="246"/>
    </location>
    <ligand>
        <name>substrate</name>
    </ligand>
</feature>
<feature type="binding site" evidence="3 8 9">
    <location>
        <position position="250"/>
    </location>
    <ligand>
        <name>S-adenosyl-L-methionine</name>
        <dbReference type="ChEBI" id="CHEBI:59789"/>
    </ligand>
</feature>
<feature type="helix" evidence="10">
    <location>
        <begin position="4"/>
        <end position="29"/>
    </location>
</feature>
<feature type="helix" evidence="10">
    <location>
        <begin position="35"/>
        <end position="56"/>
    </location>
</feature>
<feature type="helix" evidence="10">
    <location>
        <begin position="59"/>
        <end position="84"/>
    </location>
</feature>
<feature type="turn" evidence="10">
    <location>
        <begin position="87"/>
        <end position="89"/>
    </location>
</feature>
<feature type="helix" evidence="10">
    <location>
        <begin position="90"/>
        <end position="113"/>
    </location>
</feature>
<feature type="helix" evidence="10">
    <location>
        <begin position="115"/>
        <end position="117"/>
    </location>
</feature>
<feature type="helix" evidence="10">
    <location>
        <begin position="120"/>
        <end position="123"/>
    </location>
</feature>
<feature type="helix" evidence="10">
    <location>
        <begin position="129"/>
        <end position="148"/>
    </location>
</feature>
<feature type="helix" evidence="10">
    <location>
        <begin position="150"/>
        <end position="153"/>
    </location>
</feature>
<feature type="helix" evidence="10">
    <location>
        <begin position="156"/>
        <end position="180"/>
    </location>
</feature>
<feature type="helix" evidence="10">
    <location>
        <begin position="181"/>
        <end position="183"/>
    </location>
</feature>
<feature type="helix" evidence="10">
    <location>
        <begin position="203"/>
        <end position="206"/>
    </location>
</feature>
<feature type="helix" evidence="10">
    <location>
        <begin position="210"/>
        <end position="225"/>
    </location>
</feature>
<feature type="helix" evidence="10">
    <location>
        <begin position="231"/>
        <end position="258"/>
    </location>
</feature>
<feature type="helix" evidence="10">
    <location>
        <begin position="260"/>
        <end position="268"/>
    </location>
</feature>